<proteinExistence type="inferred from homology"/>
<comment type="function">
    <text evidence="2">Protect the producing cell against microcin E492.</text>
</comment>
<comment type="subcellular location">
    <subcellularLocation>
        <location evidence="2">Cell inner membrane</location>
        <topology evidence="1">Multi-pass membrane protein</topology>
    </subcellularLocation>
</comment>
<comment type="similarity">
    <text evidence="4">Belongs to the MceB microcin immunity protein family.</text>
</comment>
<keyword id="KW-0079">Bacteriocin immunity</keyword>
<keyword id="KW-0997">Cell inner membrane</keyword>
<keyword id="KW-1003">Cell membrane</keyword>
<keyword id="KW-0472">Membrane</keyword>
<keyword id="KW-0812">Transmembrane</keyword>
<keyword id="KW-1133">Transmembrane helix</keyword>
<organism>
    <name type="scientific">Klebsiella pneumoniae</name>
    <dbReference type="NCBI Taxonomy" id="573"/>
    <lineage>
        <taxon>Bacteria</taxon>
        <taxon>Pseudomonadati</taxon>
        <taxon>Pseudomonadota</taxon>
        <taxon>Gammaproteobacteria</taxon>
        <taxon>Enterobacterales</taxon>
        <taxon>Enterobacteriaceae</taxon>
        <taxon>Klebsiella/Raoultella group</taxon>
        <taxon>Klebsiella</taxon>
        <taxon>Klebsiella pneumoniae complex</taxon>
    </lineage>
</organism>
<evidence type="ECO:0000255" key="1"/>
<evidence type="ECO:0000269" key="2">
    <source>
    </source>
</evidence>
<evidence type="ECO:0000303" key="3">
    <source>
    </source>
</evidence>
<evidence type="ECO:0000305" key="4"/>
<gene>
    <name evidence="3" type="primary">mceB</name>
</gene>
<reference key="1">
    <citation type="journal article" date="1999" name="J. Bacteriol.">
        <title>Identification and properties of the genes encoding microcin E492 and its immunity protein.</title>
        <authorList>
            <person name="Lagos R."/>
            <person name="Villanueva J.E."/>
            <person name="Monasterio O."/>
        </authorList>
    </citation>
    <scope>NUCLEOTIDE SEQUENCE [GENOMIC DNA]</scope>
    <scope>FUNCTION</scope>
    <scope>SUBCELLULAR LOCATION</scope>
    <source>
        <strain>RYC492</strain>
    </source>
</reference>
<sequence>MTLLSFGFSPVFFSVMAFCIISRSKFYPQRTRNKVIVLILLTFFICFLYPLTKVYLVGSYGIFDKFYLFCFISTLIAIAINVVILTINGAKNERN</sequence>
<dbReference type="EMBL" id="AF063590">
    <property type="protein sequence ID" value="AAD04333.1"/>
    <property type="molecule type" value="Genomic_DNA"/>
</dbReference>
<dbReference type="SMR" id="Q9ZHG0"/>
<dbReference type="TCDB" id="9.B.81.1.1">
    <property type="family name" value="the mceb immunity protein (mceb) family"/>
</dbReference>
<dbReference type="GO" id="GO:0005886">
    <property type="term" value="C:plasma membrane"/>
    <property type="evidence" value="ECO:0007669"/>
    <property type="project" value="UniProtKB-SubCell"/>
</dbReference>
<dbReference type="GO" id="GO:0030153">
    <property type="term" value="P:bacteriocin immunity"/>
    <property type="evidence" value="ECO:0007669"/>
    <property type="project" value="UniProtKB-KW"/>
</dbReference>
<accession>Q9ZHG0</accession>
<protein>
    <recommendedName>
        <fullName>Microcin E492 immunity protein</fullName>
    </recommendedName>
</protein>
<name>MCEB_KLEPN</name>
<feature type="chain" id="PRO_0000218715" description="Microcin E492 immunity protein">
    <location>
        <begin position="1"/>
        <end position="95"/>
    </location>
</feature>
<feature type="transmembrane region" description="Helical" evidence="1">
    <location>
        <begin position="1"/>
        <end position="21"/>
    </location>
</feature>
<feature type="transmembrane region" description="Helical" evidence="1">
    <location>
        <begin position="35"/>
        <end position="55"/>
    </location>
</feature>
<feature type="transmembrane region" description="Helical" evidence="1">
    <location>
        <begin position="67"/>
        <end position="87"/>
    </location>
</feature>